<keyword id="KW-0963">Cytoplasm</keyword>
<keyword id="KW-0378">Hydrolase</keyword>
<keyword id="KW-0546">Nucleotide metabolism</keyword>
<keyword id="KW-1185">Reference proteome</keyword>
<reference key="1">
    <citation type="journal article" date="2003" name="Proc. Natl. Acad. Sci. U.S.A.">
        <title>The complete genome sequence of Mycobacterium bovis.</title>
        <authorList>
            <person name="Garnier T."/>
            <person name="Eiglmeier K."/>
            <person name="Camus J.-C."/>
            <person name="Medina N."/>
            <person name="Mansoor H."/>
            <person name="Pryor M."/>
            <person name="Duthoy S."/>
            <person name="Grondin S."/>
            <person name="Lacroix C."/>
            <person name="Monsempe C."/>
            <person name="Simon S."/>
            <person name="Harris B."/>
            <person name="Atkin R."/>
            <person name="Doggett J."/>
            <person name="Mayes R."/>
            <person name="Keating L."/>
            <person name="Wheeler P.R."/>
            <person name="Parkhill J."/>
            <person name="Barrell B.G."/>
            <person name="Cole S.T."/>
            <person name="Gordon S.V."/>
            <person name="Hewinson R.G."/>
        </authorList>
    </citation>
    <scope>NUCLEOTIDE SEQUENCE [LARGE SCALE GENOMIC DNA]</scope>
    <source>
        <strain>ATCC BAA-935 / AF2122/97</strain>
    </source>
</reference>
<reference key="2">
    <citation type="journal article" date="2017" name="Genome Announc.">
        <title>Updated reference genome sequence and annotation of Mycobacterium bovis AF2122/97.</title>
        <authorList>
            <person name="Malone K.M."/>
            <person name="Farrell D."/>
            <person name="Stuber T.P."/>
            <person name="Schubert O.T."/>
            <person name="Aebersold R."/>
            <person name="Robbe-Austerman S."/>
            <person name="Gordon S.V."/>
        </authorList>
    </citation>
    <scope>NUCLEOTIDE SEQUENCE [LARGE SCALE GENOMIC DNA]</scope>
    <scope>GENOME REANNOTATION</scope>
    <source>
        <strain>ATCC BAA-935 / AF2122/97</strain>
    </source>
</reference>
<evidence type="ECO:0000255" key="1">
    <source>
        <dbReference type="HAMAP-Rule" id="MF_00528"/>
    </source>
</evidence>
<accession>Q7TWT7</accession>
<accession>A0A1R3Y3P2</accession>
<accession>X2BMR0</accession>
<protein>
    <recommendedName>
        <fullName evidence="1">Nucleoside triphosphate pyrophosphatase</fullName>
        <ecNumber evidence="1">3.6.1.9</ecNumber>
    </recommendedName>
    <alternativeName>
        <fullName evidence="1">Nucleotide pyrophosphatase</fullName>
        <shortName evidence="1">Nucleotide PPase</shortName>
    </alternativeName>
</protein>
<organism>
    <name type="scientific">Mycobacterium bovis (strain ATCC BAA-935 / AF2122/97)</name>
    <dbReference type="NCBI Taxonomy" id="233413"/>
    <lineage>
        <taxon>Bacteria</taxon>
        <taxon>Bacillati</taxon>
        <taxon>Actinomycetota</taxon>
        <taxon>Actinomycetes</taxon>
        <taxon>Mycobacteriales</taxon>
        <taxon>Mycobacteriaceae</taxon>
        <taxon>Mycobacterium</taxon>
        <taxon>Mycobacterium tuberculosis complex</taxon>
    </lineage>
</organism>
<feature type="chain" id="PRO_0000123028" description="Nucleoside triphosphate pyrophosphatase">
    <location>
        <begin position="1"/>
        <end position="222"/>
    </location>
</feature>
<feature type="active site" description="Proton acceptor" evidence="1">
    <location>
        <position position="82"/>
    </location>
</feature>
<name>NTPP_MYCBO</name>
<comment type="function">
    <text evidence="1">Nucleoside triphosphate pyrophosphatase. May have a dual role in cell division arrest and in preventing the incorporation of modified nucleotides into cellular nucleic acids.</text>
</comment>
<comment type="catalytic activity">
    <reaction evidence="1">
        <text>a ribonucleoside 5'-triphosphate + H2O = a ribonucleoside 5'-phosphate + diphosphate + H(+)</text>
        <dbReference type="Rhea" id="RHEA:23996"/>
        <dbReference type="ChEBI" id="CHEBI:15377"/>
        <dbReference type="ChEBI" id="CHEBI:15378"/>
        <dbReference type="ChEBI" id="CHEBI:33019"/>
        <dbReference type="ChEBI" id="CHEBI:58043"/>
        <dbReference type="ChEBI" id="CHEBI:61557"/>
        <dbReference type="EC" id="3.6.1.9"/>
    </reaction>
</comment>
<comment type="catalytic activity">
    <reaction evidence="1">
        <text>a 2'-deoxyribonucleoside 5'-triphosphate + H2O = a 2'-deoxyribonucleoside 5'-phosphate + diphosphate + H(+)</text>
        <dbReference type="Rhea" id="RHEA:44644"/>
        <dbReference type="ChEBI" id="CHEBI:15377"/>
        <dbReference type="ChEBI" id="CHEBI:15378"/>
        <dbReference type="ChEBI" id="CHEBI:33019"/>
        <dbReference type="ChEBI" id="CHEBI:61560"/>
        <dbReference type="ChEBI" id="CHEBI:65317"/>
        <dbReference type="EC" id="3.6.1.9"/>
    </reaction>
</comment>
<comment type="cofactor">
    <cofactor evidence="1">
        <name>a divalent metal cation</name>
        <dbReference type="ChEBI" id="CHEBI:60240"/>
    </cofactor>
</comment>
<comment type="subcellular location">
    <subcellularLocation>
        <location evidence="1">Cytoplasm</location>
    </subcellularLocation>
</comment>
<comment type="similarity">
    <text evidence="1">Belongs to the Maf family.</text>
</comment>
<proteinExistence type="inferred from homology"/>
<dbReference type="EC" id="3.6.1.9" evidence="1"/>
<dbReference type="EMBL" id="LT708304">
    <property type="protein sequence ID" value="SIU01939.1"/>
    <property type="molecule type" value="Genomic_DNA"/>
</dbReference>
<dbReference type="RefSeq" id="NP_856955.1">
    <property type="nucleotide sequence ID" value="NC_002945.3"/>
</dbReference>
<dbReference type="RefSeq" id="WP_010950862.1">
    <property type="nucleotide sequence ID" value="NC_002945.4"/>
</dbReference>
<dbReference type="SMR" id="Q7TWT7"/>
<dbReference type="KEGG" id="mbo:BQ2027_MB3310"/>
<dbReference type="PATRIC" id="fig|233413.5.peg.3639"/>
<dbReference type="Proteomes" id="UP000001419">
    <property type="component" value="Chromosome"/>
</dbReference>
<dbReference type="GO" id="GO:0005737">
    <property type="term" value="C:cytoplasm"/>
    <property type="evidence" value="ECO:0007669"/>
    <property type="project" value="UniProtKB-SubCell"/>
</dbReference>
<dbReference type="GO" id="GO:0047429">
    <property type="term" value="F:nucleoside triphosphate diphosphatase activity"/>
    <property type="evidence" value="ECO:0007669"/>
    <property type="project" value="UniProtKB-EC"/>
</dbReference>
<dbReference type="GO" id="GO:0009117">
    <property type="term" value="P:nucleotide metabolic process"/>
    <property type="evidence" value="ECO:0007669"/>
    <property type="project" value="UniProtKB-KW"/>
</dbReference>
<dbReference type="CDD" id="cd00555">
    <property type="entry name" value="Maf"/>
    <property type="match status" value="1"/>
</dbReference>
<dbReference type="FunFam" id="3.90.950.10:FF:000010">
    <property type="entry name" value="Nucleoside triphosphate pyrophosphatase"/>
    <property type="match status" value="1"/>
</dbReference>
<dbReference type="Gene3D" id="3.90.950.10">
    <property type="match status" value="1"/>
</dbReference>
<dbReference type="HAMAP" id="MF_00528">
    <property type="entry name" value="Maf"/>
    <property type="match status" value="1"/>
</dbReference>
<dbReference type="InterPro" id="IPR029001">
    <property type="entry name" value="ITPase-like_fam"/>
</dbReference>
<dbReference type="InterPro" id="IPR003697">
    <property type="entry name" value="Maf-like"/>
</dbReference>
<dbReference type="NCBIfam" id="TIGR00172">
    <property type="entry name" value="maf"/>
    <property type="match status" value="1"/>
</dbReference>
<dbReference type="PANTHER" id="PTHR43213">
    <property type="entry name" value="BIFUNCTIONAL DTTP/UTP PYROPHOSPHATASE/METHYLTRANSFERASE PROTEIN-RELATED"/>
    <property type="match status" value="1"/>
</dbReference>
<dbReference type="PANTHER" id="PTHR43213:SF5">
    <property type="entry name" value="BIFUNCTIONAL DTTP_UTP PYROPHOSPHATASE_METHYLTRANSFERASE PROTEIN-RELATED"/>
    <property type="match status" value="1"/>
</dbReference>
<dbReference type="Pfam" id="PF02545">
    <property type="entry name" value="Maf"/>
    <property type="match status" value="1"/>
</dbReference>
<dbReference type="PIRSF" id="PIRSF006305">
    <property type="entry name" value="Maf"/>
    <property type="match status" value="1"/>
</dbReference>
<dbReference type="SUPFAM" id="SSF52972">
    <property type="entry name" value="ITPase-like"/>
    <property type="match status" value="1"/>
</dbReference>
<gene>
    <name type="ordered locus">BQ2027_MB3310</name>
</gene>
<sequence>MTRLVLGSASPGRLKVLRDAGIEPLVIASHVDEDVVIAALGPDAVPSDVVCVLAAAKAAQVATTLTGTQRIVAADCVVVACDSMLYIEGRLLGKPASIDEAREQWRSMAGRAGQLYTGHGVIRLQDNKTVYRSAETAITTVYFGTPSASDLEAYLASGESLRVAGGFTLDGLGGWFIDGVQGNPSNVIGLSLPLLRSLVQRCGLSVAALWAGNAGGPAHKQQ</sequence>